<name>SPEE_DICDI</name>
<proteinExistence type="inferred from homology"/>
<protein>
    <recommendedName>
        <fullName>Spermidine synthase</fullName>
        <shortName>SPDSY</shortName>
        <ecNumber>2.5.1.16</ecNumber>
    </recommendedName>
    <alternativeName>
        <fullName>Putrescine aminopropyltransferase</fullName>
    </alternativeName>
</protein>
<dbReference type="EC" id="2.5.1.16"/>
<dbReference type="EMBL" id="AF069757">
    <property type="protein sequence ID" value="AAD32851.1"/>
    <property type="molecule type" value="Genomic_DNA"/>
</dbReference>
<dbReference type="EMBL" id="AAFI02000004">
    <property type="protein sequence ID" value="EAL72904.1"/>
    <property type="molecule type" value="Genomic_DNA"/>
</dbReference>
<dbReference type="RefSeq" id="XP_647009.1">
    <property type="nucleotide sequence ID" value="XM_641917.1"/>
</dbReference>
<dbReference type="SMR" id="Q9XY92"/>
<dbReference type="FunCoup" id="Q9XY92">
    <property type="interactions" value="459"/>
</dbReference>
<dbReference type="STRING" id="44689.Q9XY92"/>
<dbReference type="PaxDb" id="44689-DDB0191167"/>
<dbReference type="EnsemblProtists" id="EAL72904">
    <property type="protein sequence ID" value="EAL72904"/>
    <property type="gene ID" value="DDB_G0268630"/>
</dbReference>
<dbReference type="GeneID" id="8616702"/>
<dbReference type="KEGG" id="ddi:DDB_G0268630"/>
<dbReference type="dictyBase" id="DDB_G0268630">
    <property type="gene designation" value="spsA"/>
</dbReference>
<dbReference type="VEuPathDB" id="AmoebaDB:DDB_G0268630"/>
<dbReference type="eggNOG" id="KOG1562">
    <property type="taxonomic scope" value="Eukaryota"/>
</dbReference>
<dbReference type="HOGENOM" id="CLU_048199_1_0_1"/>
<dbReference type="InParanoid" id="Q9XY92"/>
<dbReference type="OMA" id="FLYHEMM"/>
<dbReference type="PhylomeDB" id="Q9XY92"/>
<dbReference type="Reactome" id="R-DDI-351202">
    <property type="pathway name" value="Metabolism of polyamines"/>
</dbReference>
<dbReference type="UniPathway" id="UPA00248">
    <property type="reaction ID" value="UER00314"/>
</dbReference>
<dbReference type="PRO" id="PR:Q9XY92"/>
<dbReference type="Proteomes" id="UP000002195">
    <property type="component" value="Chromosome 1"/>
</dbReference>
<dbReference type="GO" id="GO:0005829">
    <property type="term" value="C:cytosol"/>
    <property type="evidence" value="ECO:0000318"/>
    <property type="project" value="GO_Central"/>
</dbReference>
<dbReference type="GO" id="GO:0004766">
    <property type="term" value="F:spermidine synthase activity"/>
    <property type="evidence" value="ECO:0000318"/>
    <property type="project" value="GO_Central"/>
</dbReference>
<dbReference type="GO" id="GO:0036360">
    <property type="term" value="P:sorocarp stalk morphogenesis"/>
    <property type="evidence" value="ECO:0000315"/>
    <property type="project" value="dictyBase"/>
</dbReference>
<dbReference type="GO" id="GO:0008295">
    <property type="term" value="P:spermidine biosynthetic process"/>
    <property type="evidence" value="ECO:0000315"/>
    <property type="project" value="dictyBase"/>
</dbReference>
<dbReference type="CDD" id="cd02440">
    <property type="entry name" value="AdoMet_MTases"/>
    <property type="match status" value="1"/>
</dbReference>
<dbReference type="FunFam" id="2.30.140.10:FF:000001">
    <property type="entry name" value="SPE3p Spermidine synthase"/>
    <property type="match status" value="1"/>
</dbReference>
<dbReference type="FunFam" id="3.40.50.150:FF:000013">
    <property type="entry name" value="Spermidine synthase"/>
    <property type="match status" value="1"/>
</dbReference>
<dbReference type="Gene3D" id="2.30.140.10">
    <property type="entry name" value="Spermidine synthase, tetramerisation domain"/>
    <property type="match status" value="1"/>
</dbReference>
<dbReference type="Gene3D" id="3.40.50.150">
    <property type="entry name" value="Vaccinia Virus protein VP39"/>
    <property type="match status" value="1"/>
</dbReference>
<dbReference type="HAMAP" id="MF_00198">
    <property type="entry name" value="Spermidine_synth"/>
    <property type="match status" value="1"/>
</dbReference>
<dbReference type="InterPro" id="IPR030374">
    <property type="entry name" value="PABS"/>
</dbReference>
<dbReference type="InterPro" id="IPR030373">
    <property type="entry name" value="PABS_CS"/>
</dbReference>
<dbReference type="InterPro" id="IPR029063">
    <property type="entry name" value="SAM-dependent_MTases_sf"/>
</dbReference>
<dbReference type="InterPro" id="IPR001045">
    <property type="entry name" value="Spermi_synthase"/>
</dbReference>
<dbReference type="InterPro" id="IPR030668">
    <property type="entry name" value="Spermi_synthase_euk"/>
</dbReference>
<dbReference type="InterPro" id="IPR035246">
    <property type="entry name" value="Spermidine_synt_N"/>
</dbReference>
<dbReference type="InterPro" id="IPR037163">
    <property type="entry name" value="Spermidine_synt_N_sf"/>
</dbReference>
<dbReference type="NCBIfam" id="NF002010">
    <property type="entry name" value="PRK00811.1"/>
    <property type="match status" value="1"/>
</dbReference>
<dbReference type="NCBIfam" id="TIGR00417">
    <property type="entry name" value="speE"/>
    <property type="match status" value="1"/>
</dbReference>
<dbReference type="PANTHER" id="PTHR11558:SF11">
    <property type="entry name" value="SPERMIDINE SYNTHASE"/>
    <property type="match status" value="1"/>
</dbReference>
<dbReference type="PANTHER" id="PTHR11558">
    <property type="entry name" value="SPERMIDINE/SPERMINE SYNTHASE"/>
    <property type="match status" value="1"/>
</dbReference>
<dbReference type="Pfam" id="PF17284">
    <property type="entry name" value="Spermine_synt_N"/>
    <property type="match status" value="1"/>
</dbReference>
<dbReference type="Pfam" id="PF01564">
    <property type="entry name" value="Spermine_synth"/>
    <property type="match status" value="1"/>
</dbReference>
<dbReference type="PIRSF" id="PIRSF000502">
    <property type="entry name" value="Spermidine_synth"/>
    <property type="match status" value="1"/>
</dbReference>
<dbReference type="SUPFAM" id="SSF53335">
    <property type="entry name" value="S-adenosyl-L-methionine-dependent methyltransferases"/>
    <property type="match status" value="1"/>
</dbReference>
<dbReference type="PROSITE" id="PS01330">
    <property type="entry name" value="PABS_1"/>
    <property type="match status" value="1"/>
</dbReference>
<dbReference type="PROSITE" id="PS51006">
    <property type="entry name" value="PABS_2"/>
    <property type="match status" value="1"/>
</dbReference>
<evidence type="ECO:0000250" key="1"/>
<evidence type="ECO:0000305" key="2"/>
<feature type="chain" id="PRO_0000156447" description="Spermidine synthase">
    <location>
        <begin position="1"/>
        <end position="284"/>
    </location>
</feature>
<feature type="domain" description="PABS">
    <location>
        <begin position="6"/>
        <end position="241"/>
    </location>
</feature>
<feature type="active site" description="Proton acceptor" evidence="1">
    <location>
        <position position="161"/>
    </location>
</feature>
<feature type="binding site" evidence="1">
    <location>
        <position position="37"/>
    </location>
    <ligand>
        <name>S-adenosyl 3-(methylsulfanyl)propylamine</name>
        <dbReference type="ChEBI" id="CHEBI:57443"/>
    </ligand>
</feature>
<feature type="binding site" evidence="1">
    <location>
        <position position="67"/>
    </location>
    <ligand>
        <name>putrescine</name>
        <dbReference type="ChEBI" id="CHEBI:326268"/>
    </ligand>
</feature>
<feature type="binding site" evidence="1">
    <location>
        <position position="68"/>
    </location>
    <ligand>
        <name>S-adenosyl 3-(methylsulfanyl)propylamine</name>
        <dbReference type="ChEBI" id="CHEBI:57443"/>
    </ligand>
</feature>
<feature type="binding site" evidence="1">
    <location>
        <position position="92"/>
    </location>
    <ligand>
        <name>S-adenosyl 3-(methylsulfanyl)propylamine</name>
        <dbReference type="ChEBI" id="CHEBI:57443"/>
    </ligand>
</feature>
<feature type="binding site" evidence="1">
    <location>
        <position position="112"/>
    </location>
    <ligand>
        <name>S-adenosyl 3-(methylsulfanyl)propylamine</name>
        <dbReference type="ChEBI" id="CHEBI:57443"/>
    </ligand>
</feature>
<feature type="binding site" evidence="1">
    <location>
        <begin position="143"/>
        <end position="144"/>
    </location>
    <ligand>
        <name>S-adenosyl 3-(methylsulfanyl)propylamine</name>
        <dbReference type="ChEBI" id="CHEBI:57443"/>
    </ligand>
</feature>
<feature type="binding site" evidence="1">
    <location>
        <begin position="161"/>
        <end position="164"/>
    </location>
    <ligand>
        <name>putrescine</name>
        <dbReference type="ChEBI" id="CHEBI:326268"/>
    </ligand>
</feature>
<feature type="binding site" evidence="1">
    <location>
        <position position="161"/>
    </location>
    <ligand>
        <name>S-adenosyl 3-(methylsulfanyl)propylamine</name>
        <dbReference type="ChEBI" id="CHEBI:57443"/>
    </ligand>
</feature>
<feature type="binding site" evidence="1">
    <location>
        <position position="229"/>
    </location>
    <ligand>
        <name>putrescine</name>
        <dbReference type="ChEBI" id="CHEBI:326268"/>
    </ligand>
</feature>
<feature type="sequence conflict" description="In Ref. 1; AAD32851." evidence="2" ref="1">
    <original>F</original>
    <variation>I</variation>
    <location>
        <position position="39"/>
    </location>
</feature>
<organism>
    <name type="scientific">Dictyostelium discoideum</name>
    <name type="common">Social amoeba</name>
    <dbReference type="NCBI Taxonomy" id="44689"/>
    <lineage>
        <taxon>Eukaryota</taxon>
        <taxon>Amoebozoa</taxon>
        <taxon>Evosea</taxon>
        <taxon>Eumycetozoa</taxon>
        <taxon>Dictyostelia</taxon>
        <taxon>Dictyosteliales</taxon>
        <taxon>Dictyosteliaceae</taxon>
        <taxon>Dictyostelium</taxon>
    </lineage>
</organism>
<comment type="function">
    <text evidence="1">Catalyzes the production of spermidine from putrescine and decarboxylated S-adenosylmethionine (dcSAM). Has a strong preference for putrescine as substrate (By similarity).</text>
</comment>
<comment type="catalytic activity">
    <reaction>
        <text>S-adenosyl 3-(methylsulfanyl)propylamine + putrescine = S-methyl-5'-thioadenosine + spermidine + H(+)</text>
        <dbReference type="Rhea" id="RHEA:12721"/>
        <dbReference type="ChEBI" id="CHEBI:15378"/>
        <dbReference type="ChEBI" id="CHEBI:17509"/>
        <dbReference type="ChEBI" id="CHEBI:57443"/>
        <dbReference type="ChEBI" id="CHEBI:57834"/>
        <dbReference type="ChEBI" id="CHEBI:326268"/>
        <dbReference type="EC" id="2.5.1.16"/>
    </reaction>
</comment>
<comment type="pathway">
    <text>Amine and polyamine biosynthesis; spermidine biosynthesis; spermidine from putrescine: step 1/1.</text>
</comment>
<comment type="similarity">
    <text evidence="2">Belongs to the spermidine/spermine synthase family.</text>
</comment>
<reference key="1">
    <citation type="journal article" date="1999" name="Biochim. Biophys. Acta">
        <title>Isolation of spermidine synthase gene (spsA) of Dictyostelium discoideum.</title>
        <authorList>
            <person name="Guo K."/>
            <person name="Chang W.T."/>
            <person name="Newell P.C."/>
        </authorList>
    </citation>
    <scope>NUCLEOTIDE SEQUENCE [GENOMIC DNA]</scope>
</reference>
<reference key="2">
    <citation type="journal article" date="2005" name="Nature">
        <title>The genome of the social amoeba Dictyostelium discoideum.</title>
        <authorList>
            <person name="Eichinger L."/>
            <person name="Pachebat J.A."/>
            <person name="Gloeckner G."/>
            <person name="Rajandream M.A."/>
            <person name="Sucgang R."/>
            <person name="Berriman M."/>
            <person name="Song J."/>
            <person name="Olsen R."/>
            <person name="Szafranski K."/>
            <person name="Xu Q."/>
            <person name="Tunggal B."/>
            <person name="Kummerfeld S."/>
            <person name="Madera M."/>
            <person name="Konfortov B.A."/>
            <person name="Rivero F."/>
            <person name="Bankier A.T."/>
            <person name="Lehmann R."/>
            <person name="Hamlin N."/>
            <person name="Davies R."/>
            <person name="Gaudet P."/>
            <person name="Fey P."/>
            <person name="Pilcher K."/>
            <person name="Chen G."/>
            <person name="Saunders D."/>
            <person name="Sodergren E.J."/>
            <person name="Davis P."/>
            <person name="Kerhornou A."/>
            <person name="Nie X."/>
            <person name="Hall N."/>
            <person name="Anjard C."/>
            <person name="Hemphill L."/>
            <person name="Bason N."/>
            <person name="Farbrother P."/>
            <person name="Desany B."/>
            <person name="Just E."/>
            <person name="Morio T."/>
            <person name="Rost R."/>
            <person name="Churcher C.M."/>
            <person name="Cooper J."/>
            <person name="Haydock S."/>
            <person name="van Driessche N."/>
            <person name="Cronin A."/>
            <person name="Goodhead I."/>
            <person name="Muzny D.M."/>
            <person name="Mourier T."/>
            <person name="Pain A."/>
            <person name="Lu M."/>
            <person name="Harper D."/>
            <person name="Lindsay R."/>
            <person name="Hauser H."/>
            <person name="James K.D."/>
            <person name="Quiles M."/>
            <person name="Madan Babu M."/>
            <person name="Saito T."/>
            <person name="Buchrieser C."/>
            <person name="Wardroper A."/>
            <person name="Felder M."/>
            <person name="Thangavelu M."/>
            <person name="Johnson D."/>
            <person name="Knights A."/>
            <person name="Loulseged H."/>
            <person name="Mungall K.L."/>
            <person name="Oliver K."/>
            <person name="Price C."/>
            <person name="Quail M.A."/>
            <person name="Urushihara H."/>
            <person name="Hernandez J."/>
            <person name="Rabbinowitsch E."/>
            <person name="Steffen D."/>
            <person name="Sanders M."/>
            <person name="Ma J."/>
            <person name="Kohara Y."/>
            <person name="Sharp S."/>
            <person name="Simmonds M.N."/>
            <person name="Spiegler S."/>
            <person name="Tivey A."/>
            <person name="Sugano S."/>
            <person name="White B."/>
            <person name="Walker D."/>
            <person name="Woodward J.R."/>
            <person name="Winckler T."/>
            <person name="Tanaka Y."/>
            <person name="Shaulsky G."/>
            <person name="Schleicher M."/>
            <person name="Weinstock G.M."/>
            <person name="Rosenthal A."/>
            <person name="Cox E.C."/>
            <person name="Chisholm R.L."/>
            <person name="Gibbs R.A."/>
            <person name="Loomis W.F."/>
            <person name="Platzer M."/>
            <person name="Kay R.R."/>
            <person name="Williams J.G."/>
            <person name="Dear P.H."/>
            <person name="Noegel A.A."/>
            <person name="Barrell B.G."/>
            <person name="Kuspa A."/>
        </authorList>
    </citation>
    <scope>NUCLEOTIDE SEQUENCE [LARGE SCALE GENOMIC DNA]</scope>
    <source>
        <strain>AX4</strain>
    </source>
</reference>
<accession>Q9XY92</accession>
<accession>Q55EL1</accession>
<gene>
    <name type="primary">spsA</name>
    <name type="ORF">DDB_G0268630</name>
</gene>
<keyword id="KW-0620">Polyamine biosynthesis</keyword>
<keyword id="KW-1185">Reference proteome</keyword>
<keyword id="KW-0745">Spermidine biosynthesis</keyword>
<keyword id="KW-0808">Transferase</keyword>
<sequence>MDKIQNGWFSEISEFWPGNSFSLEVEKVLHHEKSEYQDFLVFKSKSFGNVLVLDGVIQATERDEFAYQEMITHIPLFSHPSPKRVLVVGGGDGGVLREVVKHPLVESVTLCEIDKGVIEASRNFLPNMRVGFDHPKVTLFIGDGMEFMRQRKGEFDVIITDSSDPIGPAQGLFERAYYELLKAALAPGGIVCSQCESMWLHLDTIKGLTTFCKELYPNVEYAYTSIPSYPGGSIGFILCSLGGSTKAPIREITPEVQSQMQYYNGEVHKASFVLPQFAAKKLNL</sequence>